<gene>
    <name evidence="1" type="primary">yoaH</name>
    <name type="ordered locus">ECSE_1985</name>
</gene>
<protein>
    <recommendedName>
        <fullName evidence="1">UPF0181 protein YoaH</fullName>
    </recommendedName>
</protein>
<sequence length="59" mass="6554">MFAGLPSLTHEQQQKAVERIQELMAQGMSSGQAIALVAEELRANHSGERIVARFEDEDE</sequence>
<reference key="1">
    <citation type="journal article" date="2008" name="DNA Res.">
        <title>Complete genome sequence and comparative analysis of the wild-type commensal Escherichia coli strain SE11 isolated from a healthy adult.</title>
        <authorList>
            <person name="Oshima K."/>
            <person name="Toh H."/>
            <person name="Ogura Y."/>
            <person name="Sasamoto H."/>
            <person name="Morita H."/>
            <person name="Park S.-H."/>
            <person name="Ooka T."/>
            <person name="Iyoda S."/>
            <person name="Taylor T.D."/>
            <person name="Hayashi T."/>
            <person name="Itoh K."/>
            <person name="Hattori M."/>
        </authorList>
    </citation>
    <scope>NUCLEOTIDE SEQUENCE [LARGE SCALE GENOMIC DNA]</scope>
    <source>
        <strain>SE11</strain>
    </source>
</reference>
<accession>B6IBN8</accession>
<comment type="similarity">
    <text evidence="1">Belongs to the UPF0181 family.</text>
</comment>
<evidence type="ECO:0000255" key="1">
    <source>
        <dbReference type="HAMAP-Rule" id="MF_00507"/>
    </source>
</evidence>
<name>YOAH_ECOSE</name>
<organism>
    <name type="scientific">Escherichia coli (strain SE11)</name>
    <dbReference type="NCBI Taxonomy" id="409438"/>
    <lineage>
        <taxon>Bacteria</taxon>
        <taxon>Pseudomonadati</taxon>
        <taxon>Pseudomonadota</taxon>
        <taxon>Gammaproteobacteria</taxon>
        <taxon>Enterobacterales</taxon>
        <taxon>Enterobacteriaceae</taxon>
        <taxon>Escherichia</taxon>
    </lineage>
</organism>
<feature type="chain" id="PRO_1000127047" description="UPF0181 protein YoaH">
    <location>
        <begin position="1"/>
        <end position="59"/>
    </location>
</feature>
<dbReference type="EMBL" id="AP009240">
    <property type="protein sequence ID" value="BAG77509.1"/>
    <property type="molecule type" value="Genomic_DNA"/>
</dbReference>
<dbReference type="RefSeq" id="WP_000457334.1">
    <property type="nucleotide sequence ID" value="NC_011415.1"/>
</dbReference>
<dbReference type="SMR" id="B6IBN8"/>
<dbReference type="KEGG" id="ecy:ECSE_1985"/>
<dbReference type="HOGENOM" id="CLU_185263_0_0_6"/>
<dbReference type="Proteomes" id="UP000008199">
    <property type="component" value="Chromosome"/>
</dbReference>
<dbReference type="HAMAP" id="MF_00507">
    <property type="entry name" value="UPF0181"/>
    <property type="match status" value="1"/>
</dbReference>
<dbReference type="InterPro" id="IPR005371">
    <property type="entry name" value="UPF0181"/>
</dbReference>
<dbReference type="NCBIfam" id="NF003476">
    <property type="entry name" value="PRK05114.1"/>
    <property type="match status" value="1"/>
</dbReference>
<dbReference type="Pfam" id="PF03701">
    <property type="entry name" value="UPF0181"/>
    <property type="match status" value="1"/>
</dbReference>
<proteinExistence type="inferred from homology"/>